<name>Y1581_YERPY</name>
<sequence>MNLQQQLAYCQQHQQRLQLRHFDNETAWQLGEKIKRQAEKQGVALAIDITVNHQTLFSYAMAGTCAENQDWLRRKRNVVELLSTSSYAAGLMLQQRETSLDARYGVSLRDYAALGGAFPLQIKQAGIIGSVNVSGAPHLDDHNLLLQVLADFIGLPIGSIELLTPLTPLSA</sequence>
<organism>
    <name type="scientific">Yersinia pseudotuberculosis serotype O:3 (strain YPIII)</name>
    <dbReference type="NCBI Taxonomy" id="502800"/>
    <lineage>
        <taxon>Bacteria</taxon>
        <taxon>Pseudomonadati</taxon>
        <taxon>Pseudomonadota</taxon>
        <taxon>Gammaproteobacteria</taxon>
        <taxon>Enterobacterales</taxon>
        <taxon>Yersiniaceae</taxon>
        <taxon>Yersinia</taxon>
    </lineage>
</organism>
<gene>
    <name type="ordered locus">YPK_1581</name>
</gene>
<accession>B1JGN4</accession>
<reference key="1">
    <citation type="submission" date="2008-02" db="EMBL/GenBank/DDBJ databases">
        <title>Complete sequence of Yersinia pseudotuberculosis YPIII.</title>
        <authorList>
            <consortium name="US DOE Joint Genome Institute"/>
            <person name="Copeland A."/>
            <person name="Lucas S."/>
            <person name="Lapidus A."/>
            <person name="Glavina del Rio T."/>
            <person name="Dalin E."/>
            <person name="Tice H."/>
            <person name="Bruce D."/>
            <person name="Goodwin L."/>
            <person name="Pitluck S."/>
            <person name="Munk A.C."/>
            <person name="Brettin T."/>
            <person name="Detter J.C."/>
            <person name="Han C."/>
            <person name="Tapia R."/>
            <person name="Schmutz J."/>
            <person name="Larimer F."/>
            <person name="Land M."/>
            <person name="Hauser L."/>
            <person name="Challacombe J.F."/>
            <person name="Green L."/>
            <person name="Lindler L.E."/>
            <person name="Nikolich M.P."/>
            <person name="Richardson P."/>
        </authorList>
    </citation>
    <scope>NUCLEOTIDE SEQUENCE [LARGE SCALE GENOMIC DNA]</scope>
    <source>
        <strain>YPIII</strain>
    </source>
</reference>
<comment type="similarity">
    <text evidence="1">Belongs to the UPF0303 family.</text>
</comment>
<dbReference type="EMBL" id="CP000950">
    <property type="protein sequence ID" value="ACA67874.1"/>
    <property type="molecule type" value="Genomic_DNA"/>
</dbReference>
<dbReference type="RefSeq" id="WP_012303936.1">
    <property type="nucleotide sequence ID" value="NZ_CP009792.1"/>
</dbReference>
<dbReference type="SMR" id="B1JGN4"/>
<dbReference type="KEGG" id="ypy:YPK_1581"/>
<dbReference type="PATRIC" id="fig|502800.11.peg.2228"/>
<dbReference type="FunFam" id="3.30.450.150:FF:000003">
    <property type="entry name" value="UPF0303 protein YPTS_2661"/>
    <property type="match status" value="1"/>
</dbReference>
<dbReference type="Gene3D" id="3.30.450.150">
    <property type="entry name" value="Haem-degrading domain"/>
    <property type="match status" value="1"/>
</dbReference>
<dbReference type="HAMAP" id="MF_00761">
    <property type="entry name" value="UPF0303"/>
    <property type="match status" value="1"/>
</dbReference>
<dbReference type="InterPro" id="IPR005624">
    <property type="entry name" value="PduO/GlcC-like"/>
</dbReference>
<dbReference type="InterPro" id="IPR038084">
    <property type="entry name" value="PduO/GlcC-like_sf"/>
</dbReference>
<dbReference type="InterPro" id="IPR010371">
    <property type="entry name" value="YBR137W-like"/>
</dbReference>
<dbReference type="NCBIfam" id="NF002694">
    <property type="entry name" value="PRK02487.1-3"/>
    <property type="match status" value="1"/>
</dbReference>
<dbReference type="NCBIfam" id="NF002696">
    <property type="entry name" value="PRK02487.1-5"/>
    <property type="match status" value="1"/>
</dbReference>
<dbReference type="PANTHER" id="PTHR28255">
    <property type="match status" value="1"/>
</dbReference>
<dbReference type="PANTHER" id="PTHR28255:SF1">
    <property type="entry name" value="UPF0303 PROTEIN YBR137W"/>
    <property type="match status" value="1"/>
</dbReference>
<dbReference type="Pfam" id="PF03928">
    <property type="entry name" value="HbpS-like"/>
    <property type="match status" value="1"/>
</dbReference>
<dbReference type="PIRSF" id="PIRSF008757">
    <property type="entry name" value="UCP008757"/>
    <property type="match status" value="1"/>
</dbReference>
<dbReference type="SUPFAM" id="SSF143744">
    <property type="entry name" value="GlcG-like"/>
    <property type="match status" value="1"/>
</dbReference>
<protein>
    <recommendedName>
        <fullName evidence="1">UPF0303 protein YPK_1581</fullName>
    </recommendedName>
</protein>
<evidence type="ECO:0000255" key="1">
    <source>
        <dbReference type="HAMAP-Rule" id="MF_00761"/>
    </source>
</evidence>
<proteinExistence type="inferred from homology"/>
<feature type="chain" id="PRO_1000198331" description="UPF0303 protein YPK_1581">
    <location>
        <begin position="1"/>
        <end position="171"/>
    </location>
</feature>